<accession>A1WLP1</accession>
<evidence type="ECO:0000255" key="1">
    <source>
        <dbReference type="HAMAP-Rule" id="MF_01358"/>
    </source>
</evidence>
<gene>
    <name evidence="1" type="primary">nuoD</name>
    <name type="ordered locus">Veis_2810</name>
</gene>
<keyword id="KW-0997">Cell inner membrane</keyword>
<keyword id="KW-1003">Cell membrane</keyword>
<keyword id="KW-0472">Membrane</keyword>
<keyword id="KW-0520">NAD</keyword>
<keyword id="KW-0874">Quinone</keyword>
<keyword id="KW-1185">Reference proteome</keyword>
<keyword id="KW-1278">Translocase</keyword>
<keyword id="KW-0813">Transport</keyword>
<keyword id="KW-0830">Ubiquinone</keyword>
<reference key="1">
    <citation type="submission" date="2006-12" db="EMBL/GenBank/DDBJ databases">
        <title>Complete sequence of chromosome 1 of Verminephrobacter eiseniae EF01-2.</title>
        <authorList>
            <person name="Copeland A."/>
            <person name="Lucas S."/>
            <person name="Lapidus A."/>
            <person name="Barry K."/>
            <person name="Detter J.C."/>
            <person name="Glavina del Rio T."/>
            <person name="Dalin E."/>
            <person name="Tice H."/>
            <person name="Pitluck S."/>
            <person name="Chertkov O."/>
            <person name="Brettin T."/>
            <person name="Bruce D."/>
            <person name="Han C."/>
            <person name="Tapia R."/>
            <person name="Gilna P."/>
            <person name="Schmutz J."/>
            <person name="Larimer F."/>
            <person name="Land M."/>
            <person name="Hauser L."/>
            <person name="Kyrpides N."/>
            <person name="Kim E."/>
            <person name="Stahl D."/>
            <person name="Richardson P."/>
        </authorList>
    </citation>
    <scope>NUCLEOTIDE SEQUENCE [LARGE SCALE GENOMIC DNA]</scope>
    <source>
        <strain>EF01-2</strain>
    </source>
</reference>
<sequence>MAEIKNYCLNFGPQHPAAHGVLRLVLELDGEVVQRADPHIGLLHRATEKLAEHKTYIQSLPYMDRLDYVSMMCNEHAYCLALEKLLGLPVPLRAQYIRVLFAEITRLLNHLMWLGSHANDCGSSTMLMYTFREREDLFDMYEAVSGARMHAAYFRPGGVYRDLPDSMPRYQASKIRNARALAALNQNRQGSLLDFIADFAQRFPGCVDEYETLLTDNRIWKQRTVGIGVVSPQRALNLGMTGPMLRGSGIAWDLRKTQPYDVYEHMDFDVPVGKTGDCYDRYLVRVQEMREANRIIGQCVAWLRANPGPVITDNHKVAAPGRAAMKSNMEELIHHFKLFTEGFHVPEGEAYAAVEHPKGEFGIYLVSDGANKPYRLKIRAPGFAHLATLDEMARGHMIADAVAIIGTMDIVFGEIDR</sequence>
<proteinExistence type="inferred from homology"/>
<protein>
    <recommendedName>
        <fullName evidence="1">NADH-quinone oxidoreductase subunit D</fullName>
        <ecNumber evidence="1">7.1.1.-</ecNumber>
    </recommendedName>
    <alternativeName>
        <fullName evidence="1">NADH dehydrogenase I subunit D</fullName>
    </alternativeName>
    <alternativeName>
        <fullName evidence="1">NDH-1 subunit D</fullName>
    </alternativeName>
</protein>
<dbReference type="EC" id="7.1.1.-" evidence="1"/>
<dbReference type="EMBL" id="CP000542">
    <property type="protein sequence ID" value="ABM58548.1"/>
    <property type="molecule type" value="Genomic_DNA"/>
</dbReference>
<dbReference type="RefSeq" id="WP_011810545.1">
    <property type="nucleotide sequence ID" value="NC_008786.1"/>
</dbReference>
<dbReference type="SMR" id="A1WLP1"/>
<dbReference type="STRING" id="391735.Veis_2810"/>
<dbReference type="GeneID" id="76461308"/>
<dbReference type="KEGG" id="vei:Veis_2810"/>
<dbReference type="eggNOG" id="COG0649">
    <property type="taxonomic scope" value="Bacteria"/>
</dbReference>
<dbReference type="HOGENOM" id="CLU_015134_1_1_4"/>
<dbReference type="OrthoDB" id="9801496at2"/>
<dbReference type="Proteomes" id="UP000000374">
    <property type="component" value="Chromosome"/>
</dbReference>
<dbReference type="GO" id="GO:0005886">
    <property type="term" value="C:plasma membrane"/>
    <property type="evidence" value="ECO:0007669"/>
    <property type="project" value="UniProtKB-SubCell"/>
</dbReference>
<dbReference type="GO" id="GO:0051287">
    <property type="term" value="F:NAD binding"/>
    <property type="evidence" value="ECO:0007669"/>
    <property type="project" value="InterPro"/>
</dbReference>
<dbReference type="GO" id="GO:0050136">
    <property type="term" value="F:NADH:ubiquinone reductase (non-electrogenic) activity"/>
    <property type="evidence" value="ECO:0007669"/>
    <property type="project" value="UniProtKB-UniRule"/>
</dbReference>
<dbReference type="GO" id="GO:0048038">
    <property type="term" value="F:quinone binding"/>
    <property type="evidence" value="ECO:0007669"/>
    <property type="project" value="UniProtKB-KW"/>
</dbReference>
<dbReference type="FunFam" id="1.10.645.10:FF:000005">
    <property type="entry name" value="NADH-quinone oxidoreductase subunit D"/>
    <property type="match status" value="1"/>
</dbReference>
<dbReference type="Gene3D" id="1.10.645.10">
    <property type="entry name" value="Cytochrome-c3 Hydrogenase, chain B"/>
    <property type="match status" value="1"/>
</dbReference>
<dbReference type="HAMAP" id="MF_01358">
    <property type="entry name" value="NDH1_NuoD"/>
    <property type="match status" value="1"/>
</dbReference>
<dbReference type="InterPro" id="IPR001135">
    <property type="entry name" value="NADH_Q_OxRdtase_suD"/>
</dbReference>
<dbReference type="InterPro" id="IPR014029">
    <property type="entry name" value="NADH_UbQ_OxRdtase_49kDa_CS"/>
</dbReference>
<dbReference type="InterPro" id="IPR022885">
    <property type="entry name" value="NDH1_su_D/H"/>
</dbReference>
<dbReference type="InterPro" id="IPR029014">
    <property type="entry name" value="NiFe-Hase_large"/>
</dbReference>
<dbReference type="NCBIfam" id="TIGR01962">
    <property type="entry name" value="NuoD"/>
    <property type="match status" value="1"/>
</dbReference>
<dbReference type="NCBIfam" id="NF004739">
    <property type="entry name" value="PRK06075.1"/>
    <property type="match status" value="1"/>
</dbReference>
<dbReference type="PANTHER" id="PTHR11993:SF10">
    <property type="entry name" value="NADH DEHYDROGENASE [UBIQUINONE] IRON-SULFUR PROTEIN 2, MITOCHONDRIAL"/>
    <property type="match status" value="1"/>
</dbReference>
<dbReference type="PANTHER" id="PTHR11993">
    <property type="entry name" value="NADH-UBIQUINONE OXIDOREDUCTASE 49 KDA SUBUNIT"/>
    <property type="match status" value="1"/>
</dbReference>
<dbReference type="Pfam" id="PF00346">
    <property type="entry name" value="Complex1_49kDa"/>
    <property type="match status" value="1"/>
</dbReference>
<dbReference type="SUPFAM" id="SSF56762">
    <property type="entry name" value="HydB/Nqo4-like"/>
    <property type="match status" value="1"/>
</dbReference>
<dbReference type="PROSITE" id="PS00535">
    <property type="entry name" value="COMPLEX1_49K"/>
    <property type="match status" value="1"/>
</dbReference>
<feature type="chain" id="PRO_0000371945" description="NADH-quinone oxidoreductase subunit D">
    <location>
        <begin position="1"/>
        <end position="417"/>
    </location>
</feature>
<comment type="function">
    <text evidence="1">NDH-1 shuttles electrons from NADH, via FMN and iron-sulfur (Fe-S) centers, to quinones in the respiratory chain. The immediate electron acceptor for the enzyme in this species is believed to be ubiquinone. Couples the redox reaction to proton translocation (for every two electrons transferred, four hydrogen ions are translocated across the cytoplasmic membrane), and thus conserves the redox energy in a proton gradient.</text>
</comment>
<comment type="catalytic activity">
    <reaction evidence="1">
        <text>a quinone + NADH + 5 H(+)(in) = a quinol + NAD(+) + 4 H(+)(out)</text>
        <dbReference type="Rhea" id="RHEA:57888"/>
        <dbReference type="ChEBI" id="CHEBI:15378"/>
        <dbReference type="ChEBI" id="CHEBI:24646"/>
        <dbReference type="ChEBI" id="CHEBI:57540"/>
        <dbReference type="ChEBI" id="CHEBI:57945"/>
        <dbReference type="ChEBI" id="CHEBI:132124"/>
    </reaction>
</comment>
<comment type="subunit">
    <text evidence="1">NDH-1 is composed of 14 different subunits. Subunits NuoB, C, D, E, F, and G constitute the peripheral sector of the complex.</text>
</comment>
<comment type="subcellular location">
    <subcellularLocation>
        <location evidence="1">Cell inner membrane</location>
        <topology evidence="1">Peripheral membrane protein</topology>
        <orientation evidence="1">Cytoplasmic side</orientation>
    </subcellularLocation>
</comment>
<comment type="similarity">
    <text evidence="1">Belongs to the complex I 49 kDa subunit family.</text>
</comment>
<name>NUOD_VEREI</name>
<organism>
    <name type="scientific">Verminephrobacter eiseniae (strain EF01-2)</name>
    <dbReference type="NCBI Taxonomy" id="391735"/>
    <lineage>
        <taxon>Bacteria</taxon>
        <taxon>Pseudomonadati</taxon>
        <taxon>Pseudomonadota</taxon>
        <taxon>Betaproteobacteria</taxon>
        <taxon>Burkholderiales</taxon>
        <taxon>Comamonadaceae</taxon>
        <taxon>Verminephrobacter</taxon>
    </lineage>
</organism>